<evidence type="ECO:0000250" key="1"/>
<evidence type="ECO:0000255" key="2">
    <source>
        <dbReference type="PROSITE-ProRule" id="PRU00177"/>
    </source>
</evidence>
<evidence type="ECO:0000255" key="3">
    <source>
        <dbReference type="PROSITE-ProRule" id="PRU00266"/>
    </source>
</evidence>
<evidence type="ECO:0000256" key="4">
    <source>
        <dbReference type="SAM" id="MobiDB-lite"/>
    </source>
</evidence>
<evidence type="ECO:0000305" key="5"/>
<feature type="chain" id="PRO_0000378424" description="Ribonuclease 3-like protein 3">
    <location>
        <begin position="1"/>
        <end position="299"/>
    </location>
</feature>
<feature type="domain" description="RNase III" evidence="2">
    <location>
        <begin position="39"/>
        <end position="183"/>
    </location>
</feature>
<feature type="domain" description="DRBM" evidence="3">
    <location>
        <begin position="209"/>
        <end position="273"/>
    </location>
</feature>
<feature type="region of interest" description="Disordered" evidence="4">
    <location>
        <begin position="274"/>
        <end position="299"/>
    </location>
</feature>
<feature type="compositionally biased region" description="Polar residues" evidence="4">
    <location>
        <begin position="275"/>
        <end position="291"/>
    </location>
</feature>
<feature type="binding site" evidence="1">
    <location>
        <position position="79"/>
    </location>
    <ligand>
        <name>Mg(2+)</name>
        <dbReference type="ChEBI" id="CHEBI:18420"/>
    </ligand>
</feature>
<feature type="binding site" evidence="1">
    <location>
        <position position="169"/>
    </location>
    <ligand>
        <name>Mg(2+)</name>
        <dbReference type="ChEBI" id="CHEBI:18420"/>
    </ligand>
</feature>
<feature type="binding site" evidence="1">
    <location>
        <position position="172"/>
    </location>
    <ligand>
        <name>Mg(2+)</name>
        <dbReference type="ChEBI" id="CHEBI:18420"/>
    </ligand>
</feature>
<feature type="site" description="Important for activity" evidence="1">
    <location>
        <position position="165"/>
    </location>
</feature>
<feature type="sequence conflict" description="In Ref. 5; AK107404." evidence="5" ref="5">
    <original>T</original>
    <variation>P</variation>
    <location>
        <position position="61"/>
    </location>
</feature>
<protein>
    <recommendedName>
        <fullName>Ribonuclease 3-like protein 3</fullName>
        <ecNumber>3.1.26.-</ecNumber>
    </recommendedName>
    <alternativeName>
        <fullName>Ribonuclease III-like protein 3</fullName>
        <shortName>RNase III-like protein 3</shortName>
    </alternativeName>
</protein>
<gene>
    <name type="ordered locus">Os06g0358800</name>
    <name type="ordered locus">LOC_Os06g25250</name>
    <name type="ORF">OsJ_21299</name>
    <name type="ORF">OSJNBb0027A16.25</name>
</gene>
<name>RTL3_ORYSJ</name>
<proteinExistence type="evidence at transcript level"/>
<organism>
    <name type="scientific">Oryza sativa subsp. japonica</name>
    <name type="common">Rice</name>
    <dbReference type="NCBI Taxonomy" id="39947"/>
    <lineage>
        <taxon>Eukaryota</taxon>
        <taxon>Viridiplantae</taxon>
        <taxon>Streptophyta</taxon>
        <taxon>Embryophyta</taxon>
        <taxon>Tracheophyta</taxon>
        <taxon>Spermatophyta</taxon>
        <taxon>Magnoliopsida</taxon>
        <taxon>Liliopsida</taxon>
        <taxon>Poales</taxon>
        <taxon>Poaceae</taxon>
        <taxon>BOP clade</taxon>
        <taxon>Oryzoideae</taxon>
        <taxon>Oryzeae</taxon>
        <taxon>Oryzinae</taxon>
        <taxon>Oryza</taxon>
        <taxon>Oryza sativa</taxon>
    </lineage>
</organism>
<dbReference type="EC" id="3.1.26.-"/>
<dbReference type="EMBL" id="AP005914">
    <property type="protein sequence ID" value="BAD36550.1"/>
    <property type="molecule type" value="Genomic_DNA"/>
</dbReference>
<dbReference type="EMBL" id="AP008212">
    <property type="protein sequence ID" value="BAF19515.1"/>
    <property type="molecule type" value="Genomic_DNA"/>
</dbReference>
<dbReference type="EMBL" id="AP014962">
    <property type="protein sequence ID" value="BAS97697.1"/>
    <property type="molecule type" value="Genomic_DNA"/>
</dbReference>
<dbReference type="EMBL" id="CM000143">
    <property type="protein sequence ID" value="EAZ36961.1"/>
    <property type="molecule type" value="Genomic_DNA"/>
</dbReference>
<dbReference type="EMBL" id="AK107404">
    <property type="status" value="NOT_ANNOTATED_CDS"/>
    <property type="molecule type" value="mRNA"/>
</dbReference>
<dbReference type="RefSeq" id="XP_015641965.1">
    <property type="nucleotide sequence ID" value="XM_015786479.1"/>
</dbReference>
<dbReference type="SMR" id="Q69KJ0"/>
<dbReference type="FunCoup" id="Q69KJ0">
    <property type="interactions" value="3"/>
</dbReference>
<dbReference type="STRING" id="39947.Q69KJ0"/>
<dbReference type="PaxDb" id="39947-Q69KJ0"/>
<dbReference type="EnsemblPlants" id="Os06t0358800-01">
    <property type="protein sequence ID" value="Os06t0358800-01"/>
    <property type="gene ID" value="Os06g0358800"/>
</dbReference>
<dbReference type="Gramene" id="Os06t0358800-01">
    <property type="protein sequence ID" value="Os06t0358800-01"/>
    <property type="gene ID" value="Os06g0358800"/>
</dbReference>
<dbReference type="KEGG" id="dosa:Os06g0358800"/>
<dbReference type="eggNOG" id="KOG0701">
    <property type="taxonomic scope" value="Eukaryota"/>
</dbReference>
<dbReference type="HOGENOM" id="CLU_000907_5_0_1"/>
<dbReference type="InParanoid" id="Q69KJ0"/>
<dbReference type="OMA" id="NRFQEWV"/>
<dbReference type="OrthoDB" id="416741at2759"/>
<dbReference type="Proteomes" id="UP000000763">
    <property type="component" value="Chromosome 6"/>
</dbReference>
<dbReference type="Proteomes" id="UP000007752">
    <property type="component" value="Chromosome 6"/>
</dbReference>
<dbReference type="Proteomes" id="UP000059680">
    <property type="component" value="Chromosome 6"/>
</dbReference>
<dbReference type="GO" id="GO:0005737">
    <property type="term" value="C:cytoplasm"/>
    <property type="evidence" value="ECO:0000318"/>
    <property type="project" value="GO_Central"/>
</dbReference>
<dbReference type="GO" id="GO:0005634">
    <property type="term" value="C:nucleus"/>
    <property type="evidence" value="ECO:0000318"/>
    <property type="project" value="GO_Central"/>
</dbReference>
<dbReference type="GO" id="GO:0046872">
    <property type="term" value="F:metal ion binding"/>
    <property type="evidence" value="ECO:0007669"/>
    <property type="project" value="UniProtKB-KW"/>
</dbReference>
<dbReference type="GO" id="GO:0004525">
    <property type="term" value="F:ribonuclease III activity"/>
    <property type="evidence" value="ECO:0000318"/>
    <property type="project" value="GO_Central"/>
</dbReference>
<dbReference type="GO" id="GO:0003723">
    <property type="term" value="F:RNA binding"/>
    <property type="evidence" value="ECO:0000318"/>
    <property type="project" value="GO_Central"/>
</dbReference>
<dbReference type="GO" id="GO:0030422">
    <property type="term" value="P:siRNA processing"/>
    <property type="evidence" value="ECO:0000318"/>
    <property type="project" value="GO_Central"/>
</dbReference>
<dbReference type="CDD" id="cd19875">
    <property type="entry name" value="DSRM_EIF2AK2-like"/>
    <property type="match status" value="1"/>
</dbReference>
<dbReference type="CDD" id="cd00593">
    <property type="entry name" value="RIBOc"/>
    <property type="match status" value="1"/>
</dbReference>
<dbReference type="FunFam" id="1.10.1520.10:FF:000004">
    <property type="entry name" value="Endoribonuclease dicer-like 1"/>
    <property type="match status" value="1"/>
</dbReference>
<dbReference type="Gene3D" id="3.30.160.20">
    <property type="match status" value="1"/>
</dbReference>
<dbReference type="Gene3D" id="1.10.1520.10">
    <property type="entry name" value="Ribonuclease III domain"/>
    <property type="match status" value="1"/>
</dbReference>
<dbReference type="InterPro" id="IPR014720">
    <property type="entry name" value="dsRBD_dom"/>
</dbReference>
<dbReference type="InterPro" id="IPR000999">
    <property type="entry name" value="RNase_III_dom"/>
</dbReference>
<dbReference type="InterPro" id="IPR036389">
    <property type="entry name" value="RNase_III_sf"/>
</dbReference>
<dbReference type="PANTHER" id="PTHR14950">
    <property type="entry name" value="DICER-RELATED"/>
    <property type="match status" value="1"/>
</dbReference>
<dbReference type="PANTHER" id="PTHR14950:SF54">
    <property type="entry name" value="RNASE II-LIKE 1"/>
    <property type="match status" value="1"/>
</dbReference>
<dbReference type="Pfam" id="PF00035">
    <property type="entry name" value="dsrm"/>
    <property type="match status" value="1"/>
</dbReference>
<dbReference type="Pfam" id="PF00636">
    <property type="entry name" value="Ribonuclease_3"/>
    <property type="match status" value="1"/>
</dbReference>
<dbReference type="SMART" id="SM00358">
    <property type="entry name" value="DSRM"/>
    <property type="match status" value="1"/>
</dbReference>
<dbReference type="SMART" id="SM00535">
    <property type="entry name" value="RIBOc"/>
    <property type="match status" value="1"/>
</dbReference>
<dbReference type="SUPFAM" id="SSF54768">
    <property type="entry name" value="dsRNA-binding domain-like"/>
    <property type="match status" value="1"/>
</dbReference>
<dbReference type="SUPFAM" id="SSF69065">
    <property type="entry name" value="RNase III domain-like"/>
    <property type="match status" value="1"/>
</dbReference>
<dbReference type="PROSITE" id="PS50137">
    <property type="entry name" value="DS_RBD"/>
    <property type="match status" value="1"/>
</dbReference>
<dbReference type="PROSITE" id="PS00517">
    <property type="entry name" value="RNASE_3_1"/>
    <property type="match status" value="1"/>
</dbReference>
<dbReference type="PROSITE" id="PS50142">
    <property type="entry name" value="RNASE_3_2"/>
    <property type="match status" value="1"/>
</dbReference>
<keyword id="KW-0255">Endonuclease</keyword>
<keyword id="KW-0378">Hydrolase</keyword>
<keyword id="KW-0460">Magnesium</keyword>
<keyword id="KW-0464">Manganese</keyword>
<keyword id="KW-0479">Metal-binding</keyword>
<keyword id="KW-0540">Nuclease</keyword>
<keyword id="KW-1185">Reference proteome</keyword>
<keyword id="KW-0694">RNA-binding</keyword>
<comment type="function">
    <text evidence="1">Cleaves double-stranded RNA (dsRNA).</text>
</comment>
<comment type="cofactor">
    <cofactor evidence="1">
        <name>Mg(2+)</name>
        <dbReference type="ChEBI" id="CHEBI:18420"/>
    </cofactor>
    <cofactor evidence="1">
        <name>Mn(2+)</name>
        <dbReference type="ChEBI" id="CHEBI:29035"/>
    </cofactor>
</comment>
<accession>Q69KJ0</accession>
<accession>A0A0N7KM33</accession>
<reference key="1">
    <citation type="journal article" date="2005" name="Nature">
        <title>The map-based sequence of the rice genome.</title>
        <authorList>
            <consortium name="International rice genome sequencing project (IRGSP)"/>
        </authorList>
    </citation>
    <scope>NUCLEOTIDE SEQUENCE [LARGE SCALE GENOMIC DNA]</scope>
    <source>
        <strain>cv. Nipponbare</strain>
    </source>
</reference>
<reference key="2">
    <citation type="journal article" date="2008" name="Nucleic Acids Res.">
        <title>The rice annotation project database (RAP-DB): 2008 update.</title>
        <authorList>
            <consortium name="The rice annotation project (RAP)"/>
        </authorList>
    </citation>
    <scope>GENOME REANNOTATION</scope>
    <source>
        <strain>cv. Nipponbare</strain>
    </source>
</reference>
<reference key="3">
    <citation type="journal article" date="2013" name="Rice">
        <title>Improvement of the Oryza sativa Nipponbare reference genome using next generation sequence and optical map data.</title>
        <authorList>
            <person name="Kawahara Y."/>
            <person name="de la Bastide M."/>
            <person name="Hamilton J.P."/>
            <person name="Kanamori H."/>
            <person name="McCombie W.R."/>
            <person name="Ouyang S."/>
            <person name="Schwartz D.C."/>
            <person name="Tanaka T."/>
            <person name="Wu J."/>
            <person name="Zhou S."/>
            <person name="Childs K.L."/>
            <person name="Davidson R.M."/>
            <person name="Lin H."/>
            <person name="Quesada-Ocampo L."/>
            <person name="Vaillancourt B."/>
            <person name="Sakai H."/>
            <person name="Lee S.S."/>
            <person name="Kim J."/>
            <person name="Numa H."/>
            <person name="Itoh T."/>
            <person name="Buell C.R."/>
            <person name="Matsumoto T."/>
        </authorList>
    </citation>
    <scope>GENOME REANNOTATION</scope>
    <source>
        <strain>cv. Nipponbare</strain>
    </source>
</reference>
<reference key="4">
    <citation type="journal article" date="2005" name="PLoS Biol.">
        <title>The genomes of Oryza sativa: a history of duplications.</title>
        <authorList>
            <person name="Yu J."/>
            <person name="Wang J."/>
            <person name="Lin W."/>
            <person name="Li S."/>
            <person name="Li H."/>
            <person name="Zhou J."/>
            <person name="Ni P."/>
            <person name="Dong W."/>
            <person name="Hu S."/>
            <person name="Zeng C."/>
            <person name="Zhang J."/>
            <person name="Zhang Y."/>
            <person name="Li R."/>
            <person name="Xu Z."/>
            <person name="Li S."/>
            <person name="Li X."/>
            <person name="Zheng H."/>
            <person name="Cong L."/>
            <person name="Lin L."/>
            <person name="Yin J."/>
            <person name="Geng J."/>
            <person name="Li G."/>
            <person name="Shi J."/>
            <person name="Liu J."/>
            <person name="Lv H."/>
            <person name="Li J."/>
            <person name="Wang J."/>
            <person name="Deng Y."/>
            <person name="Ran L."/>
            <person name="Shi X."/>
            <person name="Wang X."/>
            <person name="Wu Q."/>
            <person name="Li C."/>
            <person name="Ren X."/>
            <person name="Wang J."/>
            <person name="Wang X."/>
            <person name="Li D."/>
            <person name="Liu D."/>
            <person name="Zhang X."/>
            <person name="Ji Z."/>
            <person name="Zhao W."/>
            <person name="Sun Y."/>
            <person name="Zhang Z."/>
            <person name="Bao J."/>
            <person name="Han Y."/>
            <person name="Dong L."/>
            <person name="Ji J."/>
            <person name="Chen P."/>
            <person name="Wu S."/>
            <person name="Liu J."/>
            <person name="Xiao Y."/>
            <person name="Bu D."/>
            <person name="Tan J."/>
            <person name="Yang L."/>
            <person name="Ye C."/>
            <person name="Zhang J."/>
            <person name="Xu J."/>
            <person name="Zhou Y."/>
            <person name="Yu Y."/>
            <person name="Zhang B."/>
            <person name="Zhuang S."/>
            <person name="Wei H."/>
            <person name="Liu B."/>
            <person name="Lei M."/>
            <person name="Yu H."/>
            <person name="Li Y."/>
            <person name="Xu H."/>
            <person name="Wei S."/>
            <person name="He X."/>
            <person name="Fang L."/>
            <person name="Zhang Z."/>
            <person name="Zhang Y."/>
            <person name="Huang X."/>
            <person name="Su Z."/>
            <person name="Tong W."/>
            <person name="Li J."/>
            <person name="Tong Z."/>
            <person name="Li S."/>
            <person name="Ye J."/>
            <person name="Wang L."/>
            <person name="Fang L."/>
            <person name="Lei T."/>
            <person name="Chen C.-S."/>
            <person name="Chen H.-C."/>
            <person name="Xu Z."/>
            <person name="Li H."/>
            <person name="Huang H."/>
            <person name="Zhang F."/>
            <person name="Xu H."/>
            <person name="Li N."/>
            <person name="Zhao C."/>
            <person name="Li S."/>
            <person name="Dong L."/>
            <person name="Huang Y."/>
            <person name="Li L."/>
            <person name="Xi Y."/>
            <person name="Qi Q."/>
            <person name="Li W."/>
            <person name="Zhang B."/>
            <person name="Hu W."/>
            <person name="Zhang Y."/>
            <person name="Tian X."/>
            <person name="Jiao Y."/>
            <person name="Liang X."/>
            <person name="Jin J."/>
            <person name="Gao L."/>
            <person name="Zheng W."/>
            <person name="Hao B."/>
            <person name="Liu S.-M."/>
            <person name="Wang W."/>
            <person name="Yuan L."/>
            <person name="Cao M."/>
            <person name="McDermott J."/>
            <person name="Samudrala R."/>
            <person name="Wang J."/>
            <person name="Wong G.K.-S."/>
            <person name="Yang H."/>
        </authorList>
    </citation>
    <scope>NUCLEOTIDE SEQUENCE [LARGE SCALE GENOMIC DNA]</scope>
    <source>
        <strain>cv. Nipponbare</strain>
    </source>
</reference>
<reference key="5">
    <citation type="journal article" date="2003" name="Science">
        <title>Collection, mapping, and annotation of over 28,000 cDNA clones from japonica rice.</title>
        <authorList>
            <consortium name="The rice full-length cDNA consortium"/>
        </authorList>
    </citation>
    <scope>NUCLEOTIDE SEQUENCE [LARGE SCALE MRNA]</scope>
    <source>
        <strain>cv. Nipponbare</strain>
    </source>
</reference>
<reference key="6">
    <citation type="journal article" date="2008" name="BMC Genomics">
        <title>Genome-wide identification, organization and phylogenetic analysis of dicer-like, argonaute and RNA-dependent RNA polymerase gene families and their expression analysis during reproductive development and stress in rice.</title>
        <authorList>
            <person name="Kapoor M."/>
            <person name="Arora R."/>
            <person name="Lama T."/>
            <person name="Nijhawan A."/>
            <person name="Khurana J.P."/>
            <person name="Tyagi A.K."/>
            <person name="Kapoor S."/>
        </authorList>
    </citation>
    <scope>GENE FAMILY</scope>
    <scope>NOMENCLATURE</scope>
</reference>
<sequence length="299" mass="33336">MESPPHATASADEMPSIWKEQHAQDAPPGFVPPMGPGEVAAVESLLGYEFRDKALVEEALTHGSFYYPYRPGVTYERLEYLGDAVLTCVVSREVFLTYGQLQPGPLTRLRAANVDKEKLARVAVVHGLHHFLRHKAPNLDGQITDFIEELSMYPIHSNGLLDPPKVLCDVVESLIGAIYCDSNFNQEIVWQVFQKLADPLISLETLGKHPVSELFEFCQKTRRGVKIVKDEWDKNLTVEVLIDGEMVGRATYAQKKEIAQNRAAKAALDKLKETLGQSQTEPMSAEVSEQFNKIDLTGS</sequence>